<evidence type="ECO:0000250" key="1">
    <source>
        <dbReference type="UniProtKB" id="P68363"/>
    </source>
</evidence>
<evidence type="ECO:0000250" key="2">
    <source>
        <dbReference type="UniProtKB" id="Q13509"/>
    </source>
</evidence>
<evidence type="ECO:0000305" key="3"/>
<sequence>MREIVHIQAGQCGNQIGAKFWEVISDEHGIDQSGTYHGDSDLQLERIDVFYNEATGGRYVPRAVLMDLEPGTMDSVRAGPFGQLFRPDNFVFGQTGAGNNWAKGHYTEGAELIDSVLDVVRKEAEGCDCLQGFQITHSLGGGTGSGMGTLLISKIREEYPDRIMETFSVFPSPKVSDTVVEPYNATLSVHQLVENADEVQVIDNEALYDICFRTLKLTTPTYGDLNHLVSAAMSGVTCSLRFPGQLNSDLRKLAVNLIPFPRLHFFMIGFAPLTSRGSQQHRALSVAELTQQMFDAKNMMCASDPRRGRYLTACAMFRGRMSTKEVDEQMSMVQNKNSSYFVEWIPHNTKSSVCDIPPKGLKMAVTFVGNSTAIQDMFKRVSEQFTAMFRRKAFLHWYTGEGMDEMEFTEAESNMNDLVSEYQQYQEATIDDDADDMVNDY</sequence>
<dbReference type="EMBL" id="L00978">
    <property type="protein sequence ID" value="AAA27796.1"/>
    <property type="molecule type" value="Genomic_DNA"/>
</dbReference>
<dbReference type="SMR" id="Q04709"/>
<dbReference type="VEuPathDB" id="PiroplasmaDB:BBOV_III004850"/>
<dbReference type="eggNOG" id="KOG1375">
    <property type="taxonomic scope" value="Eukaryota"/>
</dbReference>
<dbReference type="GO" id="GO:0005737">
    <property type="term" value="C:cytoplasm"/>
    <property type="evidence" value="ECO:0007669"/>
    <property type="project" value="UniProtKB-KW"/>
</dbReference>
<dbReference type="GO" id="GO:0005874">
    <property type="term" value="C:microtubule"/>
    <property type="evidence" value="ECO:0007669"/>
    <property type="project" value="UniProtKB-KW"/>
</dbReference>
<dbReference type="GO" id="GO:0005525">
    <property type="term" value="F:GTP binding"/>
    <property type="evidence" value="ECO:0007669"/>
    <property type="project" value="UniProtKB-KW"/>
</dbReference>
<dbReference type="GO" id="GO:0003924">
    <property type="term" value="F:GTPase activity"/>
    <property type="evidence" value="ECO:0007669"/>
    <property type="project" value="InterPro"/>
</dbReference>
<dbReference type="GO" id="GO:0046872">
    <property type="term" value="F:metal ion binding"/>
    <property type="evidence" value="ECO:0007669"/>
    <property type="project" value="UniProtKB-KW"/>
</dbReference>
<dbReference type="GO" id="GO:0005200">
    <property type="term" value="F:structural constituent of cytoskeleton"/>
    <property type="evidence" value="ECO:0007669"/>
    <property type="project" value="InterPro"/>
</dbReference>
<dbReference type="GO" id="GO:0007017">
    <property type="term" value="P:microtubule-based process"/>
    <property type="evidence" value="ECO:0007669"/>
    <property type="project" value="InterPro"/>
</dbReference>
<dbReference type="CDD" id="cd02187">
    <property type="entry name" value="beta_tubulin"/>
    <property type="match status" value="1"/>
</dbReference>
<dbReference type="FunFam" id="1.10.287.600:FF:000002">
    <property type="entry name" value="Tubulin beta chain"/>
    <property type="match status" value="1"/>
</dbReference>
<dbReference type="FunFam" id="3.30.1330.20:FF:000002">
    <property type="entry name" value="Tubulin beta chain"/>
    <property type="match status" value="1"/>
</dbReference>
<dbReference type="FunFam" id="3.40.50.1440:FF:000003">
    <property type="entry name" value="Tubulin beta chain"/>
    <property type="match status" value="1"/>
</dbReference>
<dbReference type="Gene3D" id="1.10.287.600">
    <property type="entry name" value="Helix hairpin bin"/>
    <property type="match status" value="1"/>
</dbReference>
<dbReference type="Gene3D" id="3.30.1330.20">
    <property type="entry name" value="Tubulin/FtsZ, C-terminal domain"/>
    <property type="match status" value="1"/>
</dbReference>
<dbReference type="Gene3D" id="3.40.50.1440">
    <property type="entry name" value="Tubulin/FtsZ, GTPase domain"/>
    <property type="match status" value="1"/>
</dbReference>
<dbReference type="InterPro" id="IPR013838">
    <property type="entry name" value="Beta-tubulin_BS"/>
</dbReference>
<dbReference type="InterPro" id="IPR002453">
    <property type="entry name" value="Beta_tubulin"/>
</dbReference>
<dbReference type="InterPro" id="IPR008280">
    <property type="entry name" value="Tub_FtsZ_C"/>
</dbReference>
<dbReference type="InterPro" id="IPR000217">
    <property type="entry name" value="Tubulin"/>
</dbReference>
<dbReference type="InterPro" id="IPR037103">
    <property type="entry name" value="Tubulin/FtsZ-like_C"/>
</dbReference>
<dbReference type="InterPro" id="IPR018316">
    <property type="entry name" value="Tubulin/FtsZ_2-layer-sand-dom"/>
</dbReference>
<dbReference type="InterPro" id="IPR036525">
    <property type="entry name" value="Tubulin/FtsZ_GTPase_sf"/>
</dbReference>
<dbReference type="InterPro" id="IPR023123">
    <property type="entry name" value="Tubulin_C"/>
</dbReference>
<dbReference type="InterPro" id="IPR017975">
    <property type="entry name" value="Tubulin_CS"/>
</dbReference>
<dbReference type="InterPro" id="IPR003008">
    <property type="entry name" value="Tubulin_FtsZ_GTPase"/>
</dbReference>
<dbReference type="PANTHER" id="PTHR11588">
    <property type="entry name" value="TUBULIN"/>
    <property type="match status" value="1"/>
</dbReference>
<dbReference type="Pfam" id="PF00091">
    <property type="entry name" value="Tubulin"/>
    <property type="match status" value="1"/>
</dbReference>
<dbReference type="Pfam" id="PF03953">
    <property type="entry name" value="Tubulin_C"/>
    <property type="match status" value="1"/>
</dbReference>
<dbReference type="PRINTS" id="PR01163">
    <property type="entry name" value="BETATUBULIN"/>
</dbReference>
<dbReference type="PRINTS" id="PR01161">
    <property type="entry name" value="TUBULIN"/>
</dbReference>
<dbReference type="SMART" id="SM00864">
    <property type="entry name" value="Tubulin"/>
    <property type="match status" value="1"/>
</dbReference>
<dbReference type="SMART" id="SM00865">
    <property type="entry name" value="Tubulin_C"/>
    <property type="match status" value="1"/>
</dbReference>
<dbReference type="SUPFAM" id="SSF55307">
    <property type="entry name" value="Tubulin C-terminal domain-like"/>
    <property type="match status" value="1"/>
</dbReference>
<dbReference type="SUPFAM" id="SSF52490">
    <property type="entry name" value="Tubulin nucleotide-binding domain-like"/>
    <property type="match status" value="1"/>
</dbReference>
<dbReference type="PROSITE" id="PS00227">
    <property type="entry name" value="TUBULIN"/>
    <property type="match status" value="1"/>
</dbReference>
<dbReference type="PROSITE" id="PS00228">
    <property type="entry name" value="TUBULIN_B_AUTOREG"/>
    <property type="match status" value="1"/>
</dbReference>
<accession>Q04709</accession>
<proteinExistence type="inferred from homology"/>
<organism>
    <name type="scientific">Babesia bovis</name>
    <dbReference type="NCBI Taxonomy" id="5865"/>
    <lineage>
        <taxon>Eukaryota</taxon>
        <taxon>Sar</taxon>
        <taxon>Alveolata</taxon>
        <taxon>Apicomplexa</taxon>
        <taxon>Aconoidasida</taxon>
        <taxon>Piroplasmida</taxon>
        <taxon>Babesiidae</taxon>
        <taxon>Babesia</taxon>
    </lineage>
</organism>
<feature type="chain" id="PRO_0000048283" description="Tubulin beta chain">
    <location>
        <begin position="1"/>
        <end position="441"/>
    </location>
</feature>
<feature type="binding site" evidence="2">
    <location>
        <position position="11"/>
    </location>
    <ligand>
        <name>GTP</name>
        <dbReference type="ChEBI" id="CHEBI:37565"/>
    </ligand>
</feature>
<feature type="binding site" evidence="1">
    <location>
        <position position="69"/>
    </location>
    <ligand>
        <name>GTP</name>
        <dbReference type="ChEBI" id="CHEBI:37565"/>
    </ligand>
</feature>
<feature type="binding site" evidence="1">
    <location>
        <position position="69"/>
    </location>
    <ligand>
        <name>Mg(2+)</name>
        <dbReference type="ChEBI" id="CHEBI:18420"/>
    </ligand>
</feature>
<feature type="binding site" evidence="2">
    <location>
        <position position="138"/>
    </location>
    <ligand>
        <name>GTP</name>
        <dbReference type="ChEBI" id="CHEBI:37565"/>
    </ligand>
</feature>
<feature type="binding site" evidence="2">
    <location>
        <position position="142"/>
    </location>
    <ligand>
        <name>GTP</name>
        <dbReference type="ChEBI" id="CHEBI:37565"/>
    </ligand>
</feature>
<feature type="binding site" evidence="2">
    <location>
        <position position="143"/>
    </location>
    <ligand>
        <name>GTP</name>
        <dbReference type="ChEBI" id="CHEBI:37565"/>
    </ligand>
</feature>
<feature type="binding site" evidence="2">
    <location>
        <position position="144"/>
    </location>
    <ligand>
        <name>GTP</name>
        <dbReference type="ChEBI" id="CHEBI:37565"/>
    </ligand>
</feature>
<feature type="binding site" evidence="2">
    <location>
        <position position="204"/>
    </location>
    <ligand>
        <name>GTP</name>
        <dbReference type="ChEBI" id="CHEBI:37565"/>
    </ligand>
</feature>
<feature type="binding site" evidence="2">
    <location>
        <position position="226"/>
    </location>
    <ligand>
        <name>GTP</name>
        <dbReference type="ChEBI" id="CHEBI:37565"/>
    </ligand>
</feature>
<name>TBB_BABBO</name>
<comment type="function">
    <text>Tubulin is the major constituent of microtubules, a cylinder consisting of laterally associated linear protofilaments composed of alpha- and beta-tubulin heterodimers. Microtubules grow by the addition of GTP-tubulin dimers to the microtubule end, where a stabilizing cap forms. Below the cap, tubulin dimers are in GDP-bound state, owing to GTPase activity of alpha-tubulin.</text>
</comment>
<comment type="cofactor">
    <cofactor evidence="1">
        <name>Mg(2+)</name>
        <dbReference type="ChEBI" id="CHEBI:18420"/>
    </cofactor>
</comment>
<comment type="subunit">
    <text>Dimer of alpha and beta chains. A typical microtubule is a hollow water-filled tube with an outer diameter of 25 nm and an inner diameter of 15 nM. Alpha-beta heterodimers associate head-to-tail to form protofilaments running lengthwise along the microtubule wall with the beta-tubulin subunit facing the microtubule plus end conferring a structural polarity. Microtubules usually have 13 protofilaments but different protofilament numbers can be found in some organisms and specialized cells.</text>
</comment>
<comment type="subcellular location">
    <subcellularLocation>
        <location>Cytoplasm</location>
        <location>Cytoskeleton</location>
    </subcellularLocation>
</comment>
<comment type="similarity">
    <text evidence="3">Belongs to the tubulin family.</text>
</comment>
<reference key="1">
    <citation type="journal article" date="1993" name="Mol. Biochem. Parasitol.">
        <title>Sequence of a cDNA encoding beta-tubulin from Babesia bovis.</title>
        <authorList>
            <person name="Casu R.E."/>
        </authorList>
    </citation>
    <scope>NUCLEOTIDE SEQUENCE [GENOMIC DNA]</scope>
</reference>
<keyword id="KW-0963">Cytoplasm</keyword>
<keyword id="KW-0206">Cytoskeleton</keyword>
<keyword id="KW-0342">GTP-binding</keyword>
<keyword id="KW-0460">Magnesium</keyword>
<keyword id="KW-0479">Metal-binding</keyword>
<keyword id="KW-0493">Microtubule</keyword>
<keyword id="KW-0547">Nucleotide-binding</keyword>
<protein>
    <recommendedName>
        <fullName>Tubulin beta chain</fullName>
    </recommendedName>
    <alternativeName>
        <fullName>Beta-tubulin</fullName>
    </alternativeName>
</protein>